<dbReference type="EC" id="2.4.2.7" evidence="1"/>
<dbReference type="EMBL" id="CP000378">
    <property type="protein sequence ID" value="ABF77071.1"/>
    <property type="molecule type" value="Genomic_DNA"/>
</dbReference>
<dbReference type="SMR" id="Q1BTI4"/>
<dbReference type="HOGENOM" id="CLU_063339_3_0_4"/>
<dbReference type="UniPathway" id="UPA00588">
    <property type="reaction ID" value="UER00646"/>
</dbReference>
<dbReference type="GO" id="GO:0005829">
    <property type="term" value="C:cytosol"/>
    <property type="evidence" value="ECO:0007669"/>
    <property type="project" value="TreeGrafter"/>
</dbReference>
<dbReference type="GO" id="GO:0003999">
    <property type="term" value="F:adenine phosphoribosyltransferase activity"/>
    <property type="evidence" value="ECO:0007669"/>
    <property type="project" value="UniProtKB-UniRule"/>
</dbReference>
<dbReference type="GO" id="GO:0006168">
    <property type="term" value="P:adenine salvage"/>
    <property type="evidence" value="ECO:0007669"/>
    <property type="project" value="InterPro"/>
</dbReference>
<dbReference type="GO" id="GO:0044209">
    <property type="term" value="P:AMP salvage"/>
    <property type="evidence" value="ECO:0007669"/>
    <property type="project" value="UniProtKB-UniRule"/>
</dbReference>
<dbReference type="GO" id="GO:0006166">
    <property type="term" value="P:purine ribonucleoside salvage"/>
    <property type="evidence" value="ECO:0007669"/>
    <property type="project" value="UniProtKB-KW"/>
</dbReference>
<dbReference type="CDD" id="cd06223">
    <property type="entry name" value="PRTases_typeI"/>
    <property type="match status" value="1"/>
</dbReference>
<dbReference type="FunFam" id="3.40.50.2020:FF:000021">
    <property type="entry name" value="Adenine phosphoribosyltransferase"/>
    <property type="match status" value="1"/>
</dbReference>
<dbReference type="Gene3D" id="3.40.50.2020">
    <property type="match status" value="1"/>
</dbReference>
<dbReference type="HAMAP" id="MF_00004">
    <property type="entry name" value="Aden_phosphoribosyltr"/>
    <property type="match status" value="1"/>
</dbReference>
<dbReference type="InterPro" id="IPR005764">
    <property type="entry name" value="Ade_phspho_trans"/>
</dbReference>
<dbReference type="InterPro" id="IPR050120">
    <property type="entry name" value="Adenine_PRTase"/>
</dbReference>
<dbReference type="InterPro" id="IPR000836">
    <property type="entry name" value="PRibTrfase_dom"/>
</dbReference>
<dbReference type="InterPro" id="IPR029057">
    <property type="entry name" value="PRTase-like"/>
</dbReference>
<dbReference type="NCBIfam" id="TIGR01090">
    <property type="entry name" value="apt"/>
    <property type="match status" value="1"/>
</dbReference>
<dbReference type="NCBIfam" id="NF002634">
    <property type="entry name" value="PRK02304.1-3"/>
    <property type="match status" value="1"/>
</dbReference>
<dbReference type="NCBIfam" id="NF002636">
    <property type="entry name" value="PRK02304.1-5"/>
    <property type="match status" value="1"/>
</dbReference>
<dbReference type="PANTHER" id="PTHR11776">
    <property type="entry name" value="ADENINE PHOSPHORIBOSYLTRANSFERASE"/>
    <property type="match status" value="1"/>
</dbReference>
<dbReference type="PANTHER" id="PTHR11776:SF7">
    <property type="entry name" value="PHOSPHORIBOSYLTRANSFERASE DOMAIN-CONTAINING PROTEIN"/>
    <property type="match status" value="1"/>
</dbReference>
<dbReference type="Pfam" id="PF00156">
    <property type="entry name" value="Pribosyltran"/>
    <property type="match status" value="1"/>
</dbReference>
<dbReference type="SUPFAM" id="SSF53271">
    <property type="entry name" value="PRTase-like"/>
    <property type="match status" value="1"/>
</dbReference>
<dbReference type="PROSITE" id="PS00103">
    <property type="entry name" value="PUR_PYR_PR_TRANSFER"/>
    <property type="match status" value="1"/>
</dbReference>
<organism>
    <name type="scientific">Burkholderia orbicola (strain AU 1054)</name>
    <dbReference type="NCBI Taxonomy" id="331271"/>
    <lineage>
        <taxon>Bacteria</taxon>
        <taxon>Pseudomonadati</taxon>
        <taxon>Pseudomonadota</taxon>
        <taxon>Betaproteobacteria</taxon>
        <taxon>Burkholderiales</taxon>
        <taxon>Burkholderiaceae</taxon>
        <taxon>Burkholderia</taxon>
        <taxon>Burkholderia cepacia complex</taxon>
        <taxon>Burkholderia orbicola</taxon>
    </lineage>
</organism>
<gene>
    <name evidence="1" type="primary">apt</name>
    <name type="ordered locus">Bcen_2170</name>
</gene>
<name>APT_BURO1</name>
<protein>
    <recommendedName>
        <fullName evidence="1">Adenine phosphoribosyltransferase</fullName>
        <shortName evidence="1">APRT</shortName>
        <ecNumber evidence="1">2.4.2.7</ecNumber>
    </recommendedName>
</protein>
<keyword id="KW-0963">Cytoplasm</keyword>
<keyword id="KW-0328">Glycosyltransferase</keyword>
<keyword id="KW-0660">Purine salvage</keyword>
<keyword id="KW-0808">Transferase</keyword>
<proteinExistence type="inferred from homology"/>
<accession>Q1BTI4</accession>
<reference key="1">
    <citation type="submission" date="2006-05" db="EMBL/GenBank/DDBJ databases">
        <title>Complete sequence of chromosome 1 of Burkholderia cenocepacia AU 1054.</title>
        <authorList>
            <consortium name="US DOE Joint Genome Institute"/>
            <person name="Copeland A."/>
            <person name="Lucas S."/>
            <person name="Lapidus A."/>
            <person name="Barry K."/>
            <person name="Detter J.C."/>
            <person name="Glavina del Rio T."/>
            <person name="Hammon N."/>
            <person name="Israni S."/>
            <person name="Dalin E."/>
            <person name="Tice H."/>
            <person name="Pitluck S."/>
            <person name="Chain P."/>
            <person name="Malfatti S."/>
            <person name="Shin M."/>
            <person name="Vergez L."/>
            <person name="Schmutz J."/>
            <person name="Larimer F."/>
            <person name="Land M."/>
            <person name="Hauser L."/>
            <person name="Kyrpides N."/>
            <person name="Lykidis A."/>
            <person name="LiPuma J.J."/>
            <person name="Konstantinidis K."/>
            <person name="Tiedje J.M."/>
            <person name="Richardson P."/>
        </authorList>
    </citation>
    <scope>NUCLEOTIDE SEQUENCE [LARGE SCALE GENOMIC DNA]</scope>
    <source>
        <strain>AU 1054</strain>
    </source>
</reference>
<sequence>MPHSSPGAPLDPVAFIHSQIRTVPDWPQPGVQFRDITTLLQSPKALRILVDLFVERYVDAKLDYVAGLDARGFIIAPIVAYELSVGFVPIRKVGKLPYKTRSESYDLEYGSATVEIHEDACKPGDRVIIMDDLIATGGTMMAGRNLLQRLGAEVVEGAAIIDLPDLGGSTLLRNAGLTVYTVTEFSGH</sequence>
<feature type="chain" id="PRO_0000321342" description="Adenine phosphoribosyltransferase">
    <location>
        <begin position="1"/>
        <end position="188"/>
    </location>
</feature>
<evidence type="ECO:0000255" key="1">
    <source>
        <dbReference type="HAMAP-Rule" id="MF_00004"/>
    </source>
</evidence>
<comment type="function">
    <text evidence="1">Catalyzes a salvage reaction resulting in the formation of AMP, that is energically less costly than de novo synthesis.</text>
</comment>
<comment type="catalytic activity">
    <reaction evidence="1">
        <text>AMP + diphosphate = 5-phospho-alpha-D-ribose 1-diphosphate + adenine</text>
        <dbReference type="Rhea" id="RHEA:16609"/>
        <dbReference type="ChEBI" id="CHEBI:16708"/>
        <dbReference type="ChEBI" id="CHEBI:33019"/>
        <dbReference type="ChEBI" id="CHEBI:58017"/>
        <dbReference type="ChEBI" id="CHEBI:456215"/>
        <dbReference type="EC" id="2.4.2.7"/>
    </reaction>
</comment>
<comment type="pathway">
    <text evidence="1">Purine metabolism; AMP biosynthesis via salvage pathway; AMP from adenine: step 1/1.</text>
</comment>
<comment type="subunit">
    <text evidence="1">Homodimer.</text>
</comment>
<comment type="subcellular location">
    <subcellularLocation>
        <location evidence="1">Cytoplasm</location>
    </subcellularLocation>
</comment>
<comment type="similarity">
    <text evidence="1">Belongs to the purine/pyrimidine phosphoribosyltransferase family.</text>
</comment>